<dbReference type="EC" id="3.4.16.4"/>
<dbReference type="EMBL" id="AAFI02000007">
    <property type="protein sequence ID" value="EAL71475.1"/>
    <property type="molecule type" value="Genomic_DNA"/>
</dbReference>
<dbReference type="RefSeq" id="XP_645397.1">
    <property type="nucleotide sequence ID" value="XM_640305.1"/>
</dbReference>
<dbReference type="SMR" id="Q86I79"/>
<dbReference type="STRING" id="44689.Q86I79"/>
<dbReference type="MEROPS" id="S13.A01"/>
<dbReference type="PaxDb" id="44689-DDB0233864"/>
<dbReference type="EnsemblProtists" id="EAL71475">
    <property type="protein sequence ID" value="EAL71475"/>
    <property type="gene ID" value="DDB_G0271902"/>
</dbReference>
<dbReference type="GeneID" id="8618223"/>
<dbReference type="KEGG" id="ddi:DDB_G0271902"/>
<dbReference type="dictyBase" id="DDB_G0271902">
    <property type="gene designation" value="pscA"/>
</dbReference>
<dbReference type="VEuPathDB" id="AmoebaDB:DDB_G0271902"/>
<dbReference type="eggNOG" id="ENOG502S3R5">
    <property type="taxonomic scope" value="Eukaryota"/>
</dbReference>
<dbReference type="HOGENOM" id="CLU_017692_1_2_1"/>
<dbReference type="InParanoid" id="Q86I79"/>
<dbReference type="OMA" id="DGTMRKR"/>
<dbReference type="PhylomeDB" id="Q86I79"/>
<dbReference type="PRO" id="PR:Q86I79"/>
<dbReference type="Proteomes" id="UP000002195">
    <property type="component" value="Chromosome 2"/>
</dbReference>
<dbReference type="GO" id="GO:0004185">
    <property type="term" value="F:serine-type carboxypeptidase activity"/>
    <property type="evidence" value="ECO:0000314"/>
    <property type="project" value="dictyBase"/>
</dbReference>
<dbReference type="GO" id="GO:0009002">
    <property type="term" value="F:serine-type D-Ala-D-Ala carboxypeptidase activity"/>
    <property type="evidence" value="ECO:0007669"/>
    <property type="project" value="UniProtKB-EC"/>
</dbReference>
<dbReference type="GO" id="GO:0000270">
    <property type="term" value="P:peptidoglycan metabolic process"/>
    <property type="evidence" value="ECO:0000318"/>
    <property type="project" value="GO_Central"/>
</dbReference>
<dbReference type="GO" id="GO:0030163">
    <property type="term" value="P:protein catabolic process"/>
    <property type="evidence" value="ECO:0000314"/>
    <property type="project" value="dictyBase"/>
</dbReference>
<dbReference type="GO" id="GO:0006508">
    <property type="term" value="P:proteolysis"/>
    <property type="evidence" value="ECO:0007669"/>
    <property type="project" value="UniProtKB-KW"/>
</dbReference>
<dbReference type="Gene3D" id="3.40.710.10">
    <property type="entry name" value="DD-peptidase/beta-lactamase superfamily"/>
    <property type="match status" value="1"/>
</dbReference>
<dbReference type="InterPro" id="IPR012338">
    <property type="entry name" value="Beta-lactam/transpept-like"/>
</dbReference>
<dbReference type="InterPro" id="IPR000667">
    <property type="entry name" value="Peptidase_S13"/>
</dbReference>
<dbReference type="NCBIfam" id="TIGR00666">
    <property type="entry name" value="PBP4"/>
    <property type="match status" value="1"/>
</dbReference>
<dbReference type="PANTHER" id="PTHR30023">
    <property type="entry name" value="D-ALANYL-D-ALANINE CARBOXYPEPTIDASE"/>
    <property type="match status" value="1"/>
</dbReference>
<dbReference type="PANTHER" id="PTHR30023:SF0">
    <property type="entry name" value="PENICILLIN-SENSITIVE CARBOXYPEPTIDASE A"/>
    <property type="match status" value="1"/>
</dbReference>
<dbReference type="Pfam" id="PF02113">
    <property type="entry name" value="Peptidase_S13"/>
    <property type="match status" value="1"/>
</dbReference>
<dbReference type="PRINTS" id="PR00922">
    <property type="entry name" value="DADACBPTASE3"/>
</dbReference>
<dbReference type="SUPFAM" id="SSF56601">
    <property type="entry name" value="beta-lactamase/transpeptidase-like"/>
    <property type="match status" value="1"/>
</dbReference>
<proteinExistence type="inferred from homology"/>
<organism>
    <name type="scientific">Dictyostelium discoideum</name>
    <name type="common">Social amoeba</name>
    <dbReference type="NCBI Taxonomy" id="44689"/>
    <lineage>
        <taxon>Eukaryota</taxon>
        <taxon>Amoebozoa</taxon>
        <taxon>Evosea</taxon>
        <taxon>Eumycetozoa</taxon>
        <taxon>Dictyostelia</taxon>
        <taxon>Dictyosteliales</taxon>
        <taxon>Dictyosteliaceae</taxon>
        <taxon>Dictyostelium</taxon>
    </lineage>
</organism>
<protein>
    <recommendedName>
        <fullName>Penicillin-sensitive carboxypeptidase A</fullName>
        <ecNumber>3.4.16.4</ecNumber>
    </recommendedName>
</protein>
<feature type="chain" id="PRO_0000385367" description="Penicillin-sensitive carboxypeptidase A">
    <location>
        <begin position="1"/>
        <end position="522"/>
    </location>
</feature>
<feature type="active site" description="Acyl-ester intermediate" evidence="2">
    <location>
        <position position="94"/>
    </location>
</feature>
<feature type="active site" description="Proton acceptor" evidence="2">
    <location>
        <position position="97"/>
    </location>
</feature>
<feature type="active site" evidence="2">
    <location>
        <position position="351"/>
    </location>
</feature>
<feature type="binding site" evidence="1">
    <location>
        <position position="461"/>
    </location>
    <ligand>
        <name>substrate</name>
    </ligand>
</feature>
<name>PSCA_DICDI</name>
<keyword id="KW-0121">Carboxypeptidase</keyword>
<keyword id="KW-0378">Hydrolase</keyword>
<keyword id="KW-0645">Protease</keyword>
<keyword id="KW-1185">Reference proteome</keyword>
<sequence length="522" mass="56873">MKNYKIITLLLIISILFNIIRSNKISLKDSDSGSNGNQDIQILINDILNNCSSSESSSCFGTQWGVVADIYTPSNGEFTNIFSLNELQAFTPASNTKLFTTISIFYTFGEDFKVFTPFFTDKPFNSVSGGSSNSELDFICVKGMGDPSMSIDNLIEAAKFFSSNPTMKKVNKLLLDTSFYNIGNGVDGNIPSAWEWEDLTSTYGSIPTPLIINENTMDIYITPSNVIGGKPTASFKYSGEDKYLPVIILATTTTTSNSSTSTLNYSFKMSSQSIYITGNCDINGGIQIITVPILDPEQYFLTVFSALLEDGGVEISQTAIGSCNYTGMDYKSFEVISPELSEMLNYTLLTSNNLYAETFLRQMGTFNSAASESTPTYQAGLEYIQQTLSIPTSLYTQVDGSGLSRNNFITPKSLITVIENVYTNVGDPQHDYISYLPVASLSGTLSKRFINTPASGIVHAKTGSMTGVNSLTGVILPNGLSDDQQNSIFFSIIANNSPAQNTDIIDIIDQIVILLTKFILSS</sequence>
<reference key="1">
    <citation type="journal article" date="2002" name="Nature">
        <title>Sequence and analysis of chromosome 2 of Dictyostelium discoideum.</title>
        <authorList>
            <person name="Gloeckner G."/>
            <person name="Eichinger L."/>
            <person name="Szafranski K."/>
            <person name="Pachebat J.A."/>
            <person name="Bankier A.T."/>
            <person name="Dear P.H."/>
            <person name="Lehmann R."/>
            <person name="Baumgart C."/>
            <person name="Parra G."/>
            <person name="Abril J.F."/>
            <person name="Guigo R."/>
            <person name="Kumpf K."/>
            <person name="Tunggal B."/>
            <person name="Cox E.C."/>
            <person name="Quail M.A."/>
            <person name="Platzer M."/>
            <person name="Rosenthal A."/>
            <person name="Noegel A.A."/>
        </authorList>
    </citation>
    <scope>NUCLEOTIDE SEQUENCE [LARGE SCALE GENOMIC DNA]</scope>
    <source>
        <strain>AX4</strain>
    </source>
</reference>
<reference key="2">
    <citation type="journal article" date="2005" name="Nature">
        <title>The genome of the social amoeba Dictyostelium discoideum.</title>
        <authorList>
            <person name="Eichinger L."/>
            <person name="Pachebat J.A."/>
            <person name="Gloeckner G."/>
            <person name="Rajandream M.A."/>
            <person name="Sucgang R."/>
            <person name="Berriman M."/>
            <person name="Song J."/>
            <person name="Olsen R."/>
            <person name="Szafranski K."/>
            <person name="Xu Q."/>
            <person name="Tunggal B."/>
            <person name="Kummerfeld S."/>
            <person name="Madera M."/>
            <person name="Konfortov B.A."/>
            <person name="Rivero F."/>
            <person name="Bankier A.T."/>
            <person name="Lehmann R."/>
            <person name="Hamlin N."/>
            <person name="Davies R."/>
            <person name="Gaudet P."/>
            <person name="Fey P."/>
            <person name="Pilcher K."/>
            <person name="Chen G."/>
            <person name="Saunders D."/>
            <person name="Sodergren E.J."/>
            <person name="Davis P."/>
            <person name="Kerhornou A."/>
            <person name="Nie X."/>
            <person name="Hall N."/>
            <person name="Anjard C."/>
            <person name="Hemphill L."/>
            <person name="Bason N."/>
            <person name="Farbrother P."/>
            <person name="Desany B."/>
            <person name="Just E."/>
            <person name="Morio T."/>
            <person name="Rost R."/>
            <person name="Churcher C.M."/>
            <person name="Cooper J."/>
            <person name="Haydock S."/>
            <person name="van Driessche N."/>
            <person name="Cronin A."/>
            <person name="Goodhead I."/>
            <person name="Muzny D.M."/>
            <person name="Mourier T."/>
            <person name="Pain A."/>
            <person name="Lu M."/>
            <person name="Harper D."/>
            <person name="Lindsay R."/>
            <person name="Hauser H."/>
            <person name="James K.D."/>
            <person name="Quiles M."/>
            <person name="Madan Babu M."/>
            <person name="Saito T."/>
            <person name="Buchrieser C."/>
            <person name="Wardroper A."/>
            <person name="Felder M."/>
            <person name="Thangavelu M."/>
            <person name="Johnson D."/>
            <person name="Knights A."/>
            <person name="Loulseged H."/>
            <person name="Mungall K.L."/>
            <person name="Oliver K."/>
            <person name="Price C."/>
            <person name="Quail M.A."/>
            <person name="Urushihara H."/>
            <person name="Hernandez J."/>
            <person name="Rabbinowitsch E."/>
            <person name="Steffen D."/>
            <person name="Sanders M."/>
            <person name="Ma J."/>
            <person name="Kohara Y."/>
            <person name="Sharp S."/>
            <person name="Simmonds M.N."/>
            <person name="Spiegler S."/>
            <person name="Tivey A."/>
            <person name="Sugano S."/>
            <person name="White B."/>
            <person name="Walker D."/>
            <person name="Woodward J.R."/>
            <person name="Winckler T."/>
            <person name="Tanaka Y."/>
            <person name="Shaulsky G."/>
            <person name="Schleicher M."/>
            <person name="Weinstock G.M."/>
            <person name="Rosenthal A."/>
            <person name="Cox E.C."/>
            <person name="Chisholm R.L."/>
            <person name="Gibbs R.A."/>
            <person name="Loomis W.F."/>
            <person name="Platzer M."/>
            <person name="Kay R.R."/>
            <person name="Williams J.G."/>
            <person name="Dear P.H."/>
            <person name="Noegel A.A."/>
            <person name="Barrell B.G."/>
            <person name="Kuspa A."/>
        </authorList>
    </citation>
    <scope>NUCLEOTIDE SEQUENCE [LARGE SCALE GENOMIC DNA]</scope>
    <source>
        <strain>AX4</strain>
    </source>
</reference>
<reference key="3">
    <citation type="journal article" date="2003" name="Biol. Pharm. Bull.">
        <title>Identification of a penicillin-sensitive carboxypeptidase in the cellular slime mold Dictyostelium discoideum.</title>
        <authorList>
            <person name="Yasukawa H."/>
            <person name="Kuroita T."/>
            <person name="Tamura K."/>
            <person name="Yamaguchi K."/>
        </authorList>
    </citation>
    <scope>DISRUPTION PHENOTYPE</scope>
    <scope>ACTIVITY REGULATION</scope>
    <scope>FUNCTION</scope>
</reference>
<evidence type="ECO:0000250" key="1"/>
<evidence type="ECO:0000250" key="2">
    <source>
        <dbReference type="UniProtKB" id="P39844"/>
    </source>
</evidence>
<evidence type="ECO:0000269" key="3">
    <source>
    </source>
</evidence>
<evidence type="ECO:0000305" key="4"/>
<comment type="function">
    <text evidence="3">Carboxypeptidase.</text>
</comment>
<comment type="catalytic activity">
    <reaction>
        <text>Preferential cleavage: (Ac)2-L-Lys-D-Ala-|-D-Ala. Also transpeptidation of peptidyl-alanyl moieties that are N-acyl substituents of D-alanine.</text>
        <dbReference type="EC" id="3.4.16.4"/>
    </reaction>
</comment>
<comment type="activity regulation">
    <text evidence="3">Inhibited by penicillin G.</text>
</comment>
<comment type="disruption phenotype">
    <text evidence="3">Not essential for cell growth.</text>
</comment>
<comment type="miscellaneous">
    <text>Since D.discoideum amoebae do not have a peptidoglycan cell wall, the function is not known.</text>
</comment>
<comment type="similarity">
    <text evidence="4">Belongs to the peptidase S13 family.</text>
</comment>
<gene>
    <name type="primary">pscA</name>
    <name type="ORF">DDB_G0271902</name>
</gene>
<accession>Q86I79</accession>
<accession>Q55AF7</accession>